<keyword id="KW-0120">Carbon dioxide fixation</keyword>
<keyword id="KW-0456">Lyase</keyword>
<keyword id="KW-0460">Magnesium</keyword>
<reference key="1">
    <citation type="submission" date="2007-06" db="EMBL/GenBank/DDBJ databases">
        <title>Complete sequence of Marinomonas sp. MWYL1.</title>
        <authorList>
            <consortium name="US DOE Joint Genome Institute"/>
            <person name="Copeland A."/>
            <person name="Lucas S."/>
            <person name="Lapidus A."/>
            <person name="Barry K."/>
            <person name="Glavina del Rio T."/>
            <person name="Dalin E."/>
            <person name="Tice H."/>
            <person name="Pitluck S."/>
            <person name="Kiss H."/>
            <person name="Brettin T."/>
            <person name="Bruce D."/>
            <person name="Detter J.C."/>
            <person name="Han C."/>
            <person name="Schmutz J."/>
            <person name="Larimer F."/>
            <person name="Land M."/>
            <person name="Hauser L."/>
            <person name="Kyrpides N."/>
            <person name="Kim E."/>
            <person name="Johnston A.W.B."/>
            <person name="Todd J.D."/>
            <person name="Rogers R."/>
            <person name="Wexler M."/>
            <person name="Bond P.L."/>
            <person name="Li Y."/>
            <person name="Richardson P."/>
        </authorList>
    </citation>
    <scope>NUCLEOTIDE SEQUENCE [LARGE SCALE GENOMIC DNA]</scope>
    <source>
        <strain>MWYL1</strain>
    </source>
</reference>
<evidence type="ECO:0000255" key="1">
    <source>
        <dbReference type="HAMAP-Rule" id="MF_00595"/>
    </source>
</evidence>
<name>CAPP_MARMS</name>
<feature type="chain" id="PRO_1000082429" description="Phosphoenolpyruvate carboxylase">
    <location>
        <begin position="1"/>
        <end position="876"/>
    </location>
</feature>
<feature type="active site" evidence="1">
    <location>
        <position position="138"/>
    </location>
</feature>
<feature type="active site" evidence="1">
    <location>
        <position position="544"/>
    </location>
</feature>
<sequence length="876" mass="98839">MSDSQASLRENVRLLGDCLGESMSNHLGEGFLEKVENIRLLSKNGRQSGDSAALIQALEALDDKEIVPVARAFNQFLNLSNIAEQYHRVHRRRTNESLGVYHNPVGDLLTRLSKQSFTAEQMISSLQSQSIELVLTAHPTEVVRRSLIRKYDNISSELEALDKDNILPLEETKHIRRLKEIITQAWHTDEIREDRPTPVDEAKWGFAVIEQSLWQAVPRFFRQLDEQFSEFSKEDRLPLDLAPIRFATWMGGDRDGNPNVTHKVTKEVTLLARWMAADLYIKDLNVLRSEFSMTQCNEALRARVGDSAQPYREVLRHLENKMLATKNWAKACLDGKPTSGEDIFLDIQELTDDLILCYQSLLDCGMKVIANGSLLDLIRCAATFGATLVRLDVRQDASRHIDALSAITRFYGLGDYAEWDEASRQAFLLTELNSKRPLLPMEWTPTAEVKEVLDTFAMISQGQQNSFGSYVISMASAPSDVLAVALMLKESGVGFPMRIVPLFETLADLDNAEPIIEQLFSIPWYKSYINGRQEVMIGYSDSAKDAGQIAATWGQYRAQEALTRLCKKHGIHLTLFHGRGGTVGRGGGPAHVAILSQPPGSVNGAIRVTEQGEMIRFKFGIPDIAVRSLELYCSAVMEASLIPAEPPKEEWRAIMDEMAEVGMNQYRSIIRGHEDFVPYFRATTPEQELAKLPLGSRPARRRSDGGVESLRAIPWIFAWMQIRLMLPAWLGAESALQQGVESGNLEKLREMHKKWPFFGAYLDMLDMVLAKAEPEIAEYYEKRLVGEELQGLGRLLRGKLKQVSELVKMLKKQERLIEDNKTIRQSIDVRNPYIDPLHYLQAELLYRSRKDEENAEVNKALMITMAGIASGMQNTG</sequence>
<comment type="function">
    <text evidence="1">Forms oxaloacetate, a four-carbon dicarboxylic acid source for the tricarboxylic acid cycle.</text>
</comment>
<comment type="catalytic activity">
    <reaction evidence="1">
        <text>oxaloacetate + phosphate = phosphoenolpyruvate + hydrogencarbonate</text>
        <dbReference type="Rhea" id="RHEA:28370"/>
        <dbReference type="ChEBI" id="CHEBI:16452"/>
        <dbReference type="ChEBI" id="CHEBI:17544"/>
        <dbReference type="ChEBI" id="CHEBI:43474"/>
        <dbReference type="ChEBI" id="CHEBI:58702"/>
        <dbReference type="EC" id="4.1.1.31"/>
    </reaction>
</comment>
<comment type="cofactor">
    <cofactor evidence="1">
        <name>Mg(2+)</name>
        <dbReference type="ChEBI" id="CHEBI:18420"/>
    </cofactor>
</comment>
<comment type="similarity">
    <text evidence="1">Belongs to the PEPCase type 1 family.</text>
</comment>
<organism>
    <name type="scientific">Marinomonas sp. (strain MWYL1)</name>
    <dbReference type="NCBI Taxonomy" id="400668"/>
    <lineage>
        <taxon>Bacteria</taxon>
        <taxon>Pseudomonadati</taxon>
        <taxon>Pseudomonadota</taxon>
        <taxon>Gammaproteobacteria</taxon>
        <taxon>Oceanospirillales</taxon>
        <taxon>Oceanospirillaceae</taxon>
        <taxon>Marinomonas</taxon>
    </lineage>
</organism>
<dbReference type="EC" id="4.1.1.31" evidence="1"/>
<dbReference type="EMBL" id="CP000749">
    <property type="protein sequence ID" value="ABR70184.1"/>
    <property type="molecule type" value="Genomic_DNA"/>
</dbReference>
<dbReference type="SMR" id="A6VUQ5"/>
<dbReference type="STRING" id="400668.Mmwyl1_1255"/>
<dbReference type="KEGG" id="mmw:Mmwyl1_1255"/>
<dbReference type="eggNOG" id="COG2352">
    <property type="taxonomic scope" value="Bacteria"/>
</dbReference>
<dbReference type="HOGENOM" id="CLU_006557_2_0_6"/>
<dbReference type="OrthoDB" id="9768133at2"/>
<dbReference type="GO" id="GO:0005829">
    <property type="term" value="C:cytosol"/>
    <property type="evidence" value="ECO:0007669"/>
    <property type="project" value="TreeGrafter"/>
</dbReference>
<dbReference type="GO" id="GO:0000287">
    <property type="term" value="F:magnesium ion binding"/>
    <property type="evidence" value="ECO:0007669"/>
    <property type="project" value="UniProtKB-UniRule"/>
</dbReference>
<dbReference type="GO" id="GO:0008964">
    <property type="term" value="F:phosphoenolpyruvate carboxylase activity"/>
    <property type="evidence" value="ECO:0007669"/>
    <property type="project" value="UniProtKB-UniRule"/>
</dbReference>
<dbReference type="GO" id="GO:0015977">
    <property type="term" value="P:carbon fixation"/>
    <property type="evidence" value="ECO:0007669"/>
    <property type="project" value="UniProtKB-UniRule"/>
</dbReference>
<dbReference type="GO" id="GO:0006107">
    <property type="term" value="P:oxaloacetate metabolic process"/>
    <property type="evidence" value="ECO:0007669"/>
    <property type="project" value="UniProtKB-UniRule"/>
</dbReference>
<dbReference type="GO" id="GO:0006099">
    <property type="term" value="P:tricarboxylic acid cycle"/>
    <property type="evidence" value="ECO:0007669"/>
    <property type="project" value="InterPro"/>
</dbReference>
<dbReference type="Gene3D" id="1.20.1440.90">
    <property type="entry name" value="Phosphoenolpyruvate/pyruvate domain"/>
    <property type="match status" value="1"/>
</dbReference>
<dbReference type="HAMAP" id="MF_00595">
    <property type="entry name" value="PEPcase_type1"/>
    <property type="match status" value="1"/>
</dbReference>
<dbReference type="InterPro" id="IPR021135">
    <property type="entry name" value="PEP_COase"/>
</dbReference>
<dbReference type="InterPro" id="IPR022805">
    <property type="entry name" value="PEP_COase_bac/pln-type"/>
</dbReference>
<dbReference type="InterPro" id="IPR018129">
    <property type="entry name" value="PEP_COase_Lys_AS"/>
</dbReference>
<dbReference type="InterPro" id="IPR033129">
    <property type="entry name" value="PEPCASE_His_AS"/>
</dbReference>
<dbReference type="InterPro" id="IPR015813">
    <property type="entry name" value="Pyrv/PenolPyrv_kinase-like_dom"/>
</dbReference>
<dbReference type="NCBIfam" id="NF000584">
    <property type="entry name" value="PRK00009.1"/>
    <property type="match status" value="1"/>
</dbReference>
<dbReference type="PANTHER" id="PTHR30523">
    <property type="entry name" value="PHOSPHOENOLPYRUVATE CARBOXYLASE"/>
    <property type="match status" value="1"/>
</dbReference>
<dbReference type="PANTHER" id="PTHR30523:SF6">
    <property type="entry name" value="PHOSPHOENOLPYRUVATE CARBOXYLASE"/>
    <property type="match status" value="1"/>
</dbReference>
<dbReference type="Pfam" id="PF00311">
    <property type="entry name" value="PEPcase"/>
    <property type="match status" value="1"/>
</dbReference>
<dbReference type="PRINTS" id="PR00150">
    <property type="entry name" value="PEPCARBXLASE"/>
</dbReference>
<dbReference type="SUPFAM" id="SSF51621">
    <property type="entry name" value="Phosphoenolpyruvate/pyruvate domain"/>
    <property type="match status" value="1"/>
</dbReference>
<dbReference type="PROSITE" id="PS00781">
    <property type="entry name" value="PEPCASE_1"/>
    <property type="match status" value="1"/>
</dbReference>
<dbReference type="PROSITE" id="PS00393">
    <property type="entry name" value="PEPCASE_2"/>
    <property type="match status" value="1"/>
</dbReference>
<protein>
    <recommendedName>
        <fullName evidence="1">Phosphoenolpyruvate carboxylase</fullName>
        <shortName evidence="1">PEPC</shortName>
        <shortName evidence="1">PEPCase</shortName>
        <ecNumber evidence="1">4.1.1.31</ecNumber>
    </recommendedName>
</protein>
<accession>A6VUQ5</accession>
<proteinExistence type="inferred from homology"/>
<gene>
    <name evidence="1" type="primary">ppc</name>
    <name type="ordered locus">Mmwyl1_1255</name>
</gene>